<name>ASTD_COLP3</name>
<accession>Q488Y0</accession>
<comment type="function">
    <text evidence="1">Catalyzes the NAD-dependent reduction of succinylglutamate semialdehyde into succinylglutamate.</text>
</comment>
<comment type="catalytic activity">
    <reaction evidence="1">
        <text>N-succinyl-L-glutamate 5-semialdehyde + NAD(+) + H2O = N-succinyl-L-glutamate + NADH + 2 H(+)</text>
        <dbReference type="Rhea" id="RHEA:10812"/>
        <dbReference type="ChEBI" id="CHEBI:15377"/>
        <dbReference type="ChEBI" id="CHEBI:15378"/>
        <dbReference type="ChEBI" id="CHEBI:57540"/>
        <dbReference type="ChEBI" id="CHEBI:57945"/>
        <dbReference type="ChEBI" id="CHEBI:58520"/>
        <dbReference type="ChEBI" id="CHEBI:58763"/>
        <dbReference type="EC" id="1.2.1.71"/>
    </reaction>
</comment>
<comment type="pathway">
    <text evidence="1">Amino-acid degradation; L-arginine degradation via AST pathway; L-glutamate and succinate from L-arginine: step 4/5.</text>
</comment>
<comment type="similarity">
    <text evidence="1">Belongs to the aldehyde dehydrogenase family. AstD subfamily.</text>
</comment>
<reference key="1">
    <citation type="journal article" date="2005" name="Proc. Natl. Acad. Sci. U.S.A.">
        <title>The psychrophilic lifestyle as revealed by the genome sequence of Colwellia psychrerythraea 34H through genomic and proteomic analyses.</title>
        <authorList>
            <person name="Methe B.A."/>
            <person name="Nelson K.E."/>
            <person name="Deming J.W."/>
            <person name="Momen B."/>
            <person name="Melamud E."/>
            <person name="Zhang X."/>
            <person name="Moult J."/>
            <person name="Madupu R."/>
            <person name="Nelson W.C."/>
            <person name="Dodson R.J."/>
            <person name="Brinkac L.M."/>
            <person name="Daugherty S.C."/>
            <person name="Durkin A.S."/>
            <person name="DeBoy R.T."/>
            <person name="Kolonay J.F."/>
            <person name="Sullivan S.A."/>
            <person name="Zhou L."/>
            <person name="Davidsen T.M."/>
            <person name="Wu M."/>
            <person name="Huston A.L."/>
            <person name="Lewis M."/>
            <person name="Weaver B."/>
            <person name="Weidman J.F."/>
            <person name="Khouri H."/>
            <person name="Utterback T.R."/>
            <person name="Feldblyum T.V."/>
            <person name="Fraser C.M."/>
        </authorList>
    </citation>
    <scope>NUCLEOTIDE SEQUENCE [LARGE SCALE GENOMIC DNA]</scope>
    <source>
        <strain>34H / ATCC BAA-681</strain>
    </source>
</reference>
<sequence>MSHANPVQFINGQWQAGLGHDVSSSNPARNEVIWQGKTASKDQVNDAVLSARQAFESWANISLEARVAVVTKFAELLAENKDALATTIALETGKPKWETTGEAGAMVAKVAISLKAYNERTGTVENPMPGAKAFIRHKPHGVVAIFGPYNFPGHLPNGHIVPALIAGNTIVFKPSELTPRVAQEMLKLWEQAGLPNGVINLVQGEVETGKALASHKLIDGLFFTGSSNTGHILHEQFAGQPGKILALEMGGNNPLVVKDVSDIDAVVHDIVQSAFVTTGQRCTCARRLFIEANEQGDAILARLIEVTKNLTIGYYDDEAQPFMGSMISEKAALSLVDAQAKLLALGAKSVLDLKHLEVGTGFVSPGIIDVSDIIADIPDEEYFGPLVKLYRYNDFDKAIDEANNTGFGLSAGLLSDSEASYNHFFTRIRAGIVNWNKPITGASSAAPFGGIGASGNHRASAFYAADYCAYPIASVEAEKVSLPETLTPGMKF</sequence>
<proteinExistence type="inferred from homology"/>
<organism>
    <name type="scientific">Colwellia psychrerythraea (strain 34H / ATCC BAA-681)</name>
    <name type="common">Vibrio psychroerythus</name>
    <dbReference type="NCBI Taxonomy" id="167879"/>
    <lineage>
        <taxon>Bacteria</taxon>
        <taxon>Pseudomonadati</taxon>
        <taxon>Pseudomonadota</taxon>
        <taxon>Gammaproteobacteria</taxon>
        <taxon>Alteromonadales</taxon>
        <taxon>Colwelliaceae</taxon>
        <taxon>Colwellia</taxon>
    </lineage>
</organism>
<dbReference type="EC" id="1.2.1.71" evidence="1"/>
<dbReference type="EMBL" id="CP000083">
    <property type="protein sequence ID" value="AAZ28301.1"/>
    <property type="molecule type" value="Genomic_DNA"/>
</dbReference>
<dbReference type="RefSeq" id="WP_011041484.1">
    <property type="nucleotide sequence ID" value="NC_003910.7"/>
</dbReference>
<dbReference type="SMR" id="Q488Y0"/>
<dbReference type="STRING" id="167879.CPS_0634"/>
<dbReference type="KEGG" id="cps:CPS_0634"/>
<dbReference type="eggNOG" id="COG1012">
    <property type="taxonomic scope" value="Bacteria"/>
</dbReference>
<dbReference type="HOGENOM" id="CLU_005391_1_0_6"/>
<dbReference type="UniPathway" id="UPA00185">
    <property type="reaction ID" value="UER00282"/>
</dbReference>
<dbReference type="Proteomes" id="UP000000547">
    <property type="component" value="Chromosome"/>
</dbReference>
<dbReference type="GO" id="GO:0043824">
    <property type="term" value="F:succinylglutamate-semialdehyde dehydrogenase activity"/>
    <property type="evidence" value="ECO:0007669"/>
    <property type="project" value="UniProtKB-EC"/>
</dbReference>
<dbReference type="GO" id="GO:0019544">
    <property type="term" value="P:arginine catabolic process to glutamate"/>
    <property type="evidence" value="ECO:0007669"/>
    <property type="project" value="UniProtKB-UniRule"/>
</dbReference>
<dbReference type="GO" id="GO:0019545">
    <property type="term" value="P:arginine catabolic process to succinate"/>
    <property type="evidence" value="ECO:0007669"/>
    <property type="project" value="UniProtKB-UniRule"/>
</dbReference>
<dbReference type="CDD" id="cd07095">
    <property type="entry name" value="ALDH_SGSD_AstD"/>
    <property type="match status" value="1"/>
</dbReference>
<dbReference type="FunFam" id="3.40.605.10:FF:000010">
    <property type="entry name" value="N-succinylglutamate 5-semialdehyde dehydrogenase"/>
    <property type="match status" value="1"/>
</dbReference>
<dbReference type="Gene3D" id="3.40.605.10">
    <property type="entry name" value="Aldehyde Dehydrogenase, Chain A, domain 1"/>
    <property type="match status" value="1"/>
</dbReference>
<dbReference type="Gene3D" id="3.40.309.10">
    <property type="entry name" value="Aldehyde Dehydrogenase, Chain A, domain 2"/>
    <property type="match status" value="1"/>
</dbReference>
<dbReference type="HAMAP" id="MF_01174">
    <property type="entry name" value="Aldedh_AstD"/>
    <property type="match status" value="1"/>
</dbReference>
<dbReference type="InterPro" id="IPR016161">
    <property type="entry name" value="Ald_DH/histidinol_DH"/>
</dbReference>
<dbReference type="InterPro" id="IPR016163">
    <property type="entry name" value="Ald_DH_C"/>
</dbReference>
<dbReference type="InterPro" id="IPR016160">
    <property type="entry name" value="Ald_DH_CS_CYS"/>
</dbReference>
<dbReference type="InterPro" id="IPR029510">
    <property type="entry name" value="Ald_DH_CS_GLU"/>
</dbReference>
<dbReference type="InterPro" id="IPR016162">
    <property type="entry name" value="Ald_DH_N"/>
</dbReference>
<dbReference type="InterPro" id="IPR015590">
    <property type="entry name" value="Aldehyde_DH_dom"/>
</dbReference>
<dbReference type="InterPro" id="IPR017649">
    <property type="entry name" value="SuccinylGlu_semiald_DH_AstD"/>
</dbReference>
<dbReference type="NCBIfam" id="TIGR03240">
    <property type="entry name" value="arg_catab_astD"/>
    <property type="match status" value="1"/>
</dbReference>
<dbReference type="NCBIfam" id="NF006992">
    <property type="entry name" value="PRK09457.1"/>
    <property type="match status" value="1"/>
</dbReference>
<dbReference type="PANTHER" id="PTHR11699">
    <property type="entry name" value="ALDEHYDE DEHYDROGENASE-RELATED"/>
    <property type="match status" value="1"/>
</dbReference>
<dbReference type="Pfam" id="PF00171">
    <property type="entry name" value="Aldedh"/>
    <property type="match status" value="1"/>
</dbReference>
<dbReference type="SUPFAM" id="SSF53720">
    <property type="entry name" value="ALDH-like"/>
    <property type="match status" value="1"/>
</dbReference>
<dbReference type="PROSITE" id="PS00070">
    <property type="entry name" value="ALDEHYDE_DEHYDR_CYS"/>
    <property type="match status" value="1"/>
</dbReference>
<dbReference type="PROSITE" id="PS00687">
    <property type="entry name" value="ALDEHYDE_DEHYDR_GLU"/>
    <property type="match status" value="1"/>
</dbReference>
<feature type="chain" id="PRO_0000262398" description="N-succinylglutamate 5-semialdehyde dehydrogenase">
    <location>
        <begin position="1"/>
        <end position="492"/>
    </location>
</feature>
<feature type="active site" evidence="1">
    <location>
        <position position="248"/>
    </location>
</feature>
<feature type="active site" evidence="1">
    <location>
        <position position="282"/>
    </location>
</feature>
<feature type="binding site" evidence="1">
    <location>
        <begin position="225"/>
        <end position="230"/>
    </location>
    <ligand>
        <name>NAD(+)</name>
        <dbReference type="ChEBI" id="CHEBI:57540"/>
    </ligand>
</feature>
<evidence type="ECO:0000255" key="1">
    <source>
        <dbReference type="HAMAP-Rule" id="MF_01174"/>
    </source>
</evidence>
<gene>
    <name evidence="1" type="primary">astD</name>
    <name type="ordered locus">CPS_0634</name>
</gene>
<protein>
    <recommendedName>
        <fullName evidence="1">N-succinylglutamate 5-semialdehyde dehydrogenase</fullName>
        <ecNumber evidence="1">1.2.1.71</ecNumber>
    </recommendedName>
    <alternativeName>
        <fullName evidence="1">Succinylglutamic semialdehyde dehydrogenase</fullName>
        <shortName evidence="1">SGSD</shortName>
    </alternativeName>
</protein>
<keyword id="KW-0056">Arginine metabolism</keyword>
<keyword id="KW-0520">NAD</keyword>
<keyword id="KW-0560">Oxidoreductase</keyword>